<organism>
    <name type="scientific">Candida tropicalis</name>
    <name type="common">Yeast</name>
    <dbReference type="NCBI Taxonomy" id="5482"/>
    <lineage>
        <taxon>Eukaryota</taxon>
        <taxon>Fungi</taxon>
        <taxon>Dikarya</taxon>
        <taxon>Ascomycota</taxon>
        <taxon>Saccharomycotina</taxon>
        <taxon>Pichiomycetes</taxon>
        <taxon>Debaryomycetaceae</taxon>
        <taxon>Candida/Lodderomyces clade</taxon>
        <taxon>Candida</taxon>
    </lineage>
</organism>
<accession>P30610</accession>
<evidence type="ECO:0000250" key="1"/>
<evidence type="ECO:0000305" key="2"/>
<comment type="function">
    <text>Together with an NADPH cytochrome P450 the enzyme system catalyzes the terminal hydroxylation as the first step in the assimilation of alkanes and fatty acids. Preferentially hydroxylates lauric acid.</text>
</comment>
<comment type="cofactor">
    <cofactor evidence="1">
        <name>heme</name>
        <dbReference type="ChEBI" id="CHEBI:30413"/>
    </cofactor>
</comment>
<comment type="induction">
    <text>By various alkanes.</text>
</comment>
<comment type="similarity">
    <text evidence="2">Belongs to the cytochrome P450 family.</text>
</comment>
<gene>
    <name type="primary">CYP52A8</name>
</gene>
<sequence>MYEQVVEYWYVVLPLVFILHKVFDMWHTRRLMKQLGAAPVTNQLHDNFFGIINGWKHLSSRKKVELKNIMIINLPIRKFQVWVHMLVPSLEQSSSSQKIRRNIKALLATQFSDFSLGKRHTLFKPLLGDGIFTLDGQGWKHSRAMLRPQFAREQVAHVTSLEPHFQLLKKHMVKNKGGFFDIQELFFRFTVDSATEFLFGESVHSLKDETIGSYQDDIDFVGRKDFAESFNKAQEYLAIRTLVQDFYYLVNNQEFRDCNKLVHKFTNYYVQRALDATPEELEKQSGYVFLYELVKQTRGPNVLRDQSLNILLAGRDTSAGLLSFAVFELARNPHIWAKLREDVESQFGLGEQSRIEEITFESLKRCGYLKAFLNETLRVYPSVPRNFRIATKNTTLPRGGGSDGNSPVLVKKGEAVSYGINSTHLDPVYYGDDAAEFRPERWNEPSTRKLGWAYLPFNGGPRICLGQQFALTEAGYVLVRLAQSFDTLELKPPVVYPPKRLTNLTMSLQDGTIVKID</sequence>
<name>CP52H_CANTR</name>
<proteinExistence type="evidence at transcript level"/>
<feature type="chain" id="PRO_0000052026" description="Cytochrome P450 52A8">
    <location>
        <begin position="1"/>
        <end position="517"/>
    </location>
</feature>
<feature type="binding site" description="axial binding residue" evidence="1">
    <location>
        <position position="464"/>
    </location>
    <ligand>
        <name>heme</name>
        <dbReference type="ChEBI" id="CHEBI:30413"/>
    </ligand>
    <ligandPart>
        <name>Fe</name>
        <dbReference type="ChEBI" id="CHEBI:18248"/>
    </ligandPart>
</feature>
<dbReference type="EC" id="1.14.14.-"/>
<dbReference type="EMBL" id="Z13012">
    <property type="protein sequence ID" value="CAA78356.1"/>
    <property type="molecule type" value="Genomic_DNA"/>
</dbReference>
<dbReference type="PIR" id="S22974">
    <property type="entry name" value="S22974"/>
</dbReference>
<dbReference type="SMR" id="P30610"/>
<dbReference type="VEuPathDB" id="FungiDB:CTMYA2_002810"/>
<dbReference type="VEuPathDB" id="FungiDB:CTRG_03115"/>
<dbReference type="GO" id="GO:0020037">
    <property type="term" value="F:heme binding"/>
    <property type="evidence" value="ECO:0007669"/>
    <property type="project" value="InterPro"/>
</dbReference>
<dbReference type="GO" id="GO:0005506">
    <property type="term" value="F:iron ion binding"/>
    <property type="evidence" value="ECO:0007669"/>
    <property type="project" value="InterPro"/>
</dbReference>
<dbReference type="GO" id="GO:0016712">
    <property type="term" value="F:oxidoreductase activity, acting on paired donors, with incorporation or reduction of molecular oxygen, reduced flavin or flavoprotein as one donor, and incorporation of one atom of oxygen"/>
    <property type="evidence" value="ECO:0007669"/>
    <property type="project" value="InterPro"/>
</dbReference>
<dbReference type="CDD" id="cd11063">
    <property type="entry name" value="CYP52"/>
    <property type="match status" value="1"/>
</dbReference>
<dbReference type="Gene3D" id="1.10.630.10">
    <property type="entry name" value="Cytochrome P450"/>
    <property type="match status" value="1"/>
</dbReference>
<dbReference type="InterPro" id="IPR001128">
    <property type="entry name" value="Cyt_P450"/>
</dbReference>
<dbReference type="InterPro" id="IPR017972">
    <property type="entry name" value="Cyt_P450_CS"/>
</dbReference>
<dbReference type="InterPro" id="IPR002974">
    <property type="entry name" value="Cyt_P450_E_CYP52_ascomycetes"/>
</dbReference>
<dbReference type="InterPro" id="IPR047146">
    <property type="entry name" value="Cyt_P450_E_CYP52_fungi"/>
</dbReference>
<dbReference type="InterPro" id="IPR002402">
    <property type="entry name" value="Cyt_P450_E_grp-II"/>
</dbReference>
<dbReference type="InterPro" id="IPR036396">
    <property type="entry name" value="Cyt_P450_sf"/>
</dbReference>
<dbReference type="PANTHER" id="PTHR24287">
    <property type="entry name" value="P450, PUTATIVE (EUROFUNG)-RELATED"/>
    <property type="match status" value="1"/>
</dbReference>
<dbReference type="PANTHER" id="PTHR24287:SF1">
    <property type="entry name" value="P450, PUTATIVE (EUROFUNG)-RELATED"/>
    <property type="match status" value="1"/>
</dbReference>
<dbReference type="Pfam" id="PF00067">
    <property type="entry name" value="p450"/>
    <property type="match status" value="1"/>
</dbReference>
<dbReference type="PRINTS" id="PR00464">
    <property type="entry name" value="EP450II"/>
</dbReference>
<dbReference type="PRINTS" id="PR01239">
    <property type="entry name" value="EP450IICYP52"/>
</dbReference>
<dbReference type="PRINTS" id="PR00385">
    <property type="entry name" value="P450"/>
</dbReference>
<dbReference type="SUPFAM" id="SSF48264">
    <property type="entry name" value="Cytochrome P450"/>
    <property type="match status" value="1"/>
</dbReference>
<dbReference type="PROSITE" id="PS00086">
    <property type="entry name" value="CYTOCHROME_P450"/>
    <property type="match status" value="1"/>
</dbReference>
<reference key="1">
    <citation type="journal article" date="1992" name="DNA Cell Biol.">
        <title>Identification and characterization of additional members of the cytochrome P450 multigene family CYP52 of Candida tropicalis.</title>
        <authorList>
            <person name="Seghezzi W."/>
            <person name="Meili C."/>
            <person name="Ruffiner R."/>
            <person name="Kuenzi R."/>
            <person name="Sanglard D."/>
            <person name="Fiechter A."/>
        </authorList>
    </citation>
    <scope>NUCLEOTIDE SEQUENCE [GENOMIC DNA]</scope>
    <source>
        <strain>ATCC 750 / CBS 94 / DSM 11953 / JCM 1541 / NBRC 1400</strain>
    </source>
</reference>
<keyword id="KW-0349">Heme</keyword>
<keyword id="KW-0408">Iron</keyword>
<keyword id="KW-0479">Metal-binding</keyword>
<keyword id="KW-0503">Monooxygenase</keyword>
<keyword id="KW-0560">Oxidoreductase</keyword>
<protein>
    <recommendedName>
        <fullName>Cytochrome P450 52A8</fullName>
        <ecNumber>1.14.14.-</ecNumber>
    </recommendedName>
    <alternativeName>
        <fullName>Alkane-inducible P450-ALK5</fullName>
    </alternativeName>
    <alternativeName>
        <fullName>CYPLIIA8</fullName>
    </alternativeName>
</protein>